<organism>
    <name type="scientific">Terrybacteria sp. (strain RIFCSPHIGHO2_01_FULL_58_15)</name>
    <dbReference type="NCBI Taxonomy" id="1802363"/>
    <lineage>
        <taxon>Bacteria</taxon>
        <taxon>Candidatus Terryibacteriota</taxon>
    </lineage>
</organism>
<gene>
    <name evidence="3" type="primary">ubact</name>
    <name evidence="6" type="ORF">A2682_02640</name>
</gene>
<feature type="chain" id="PRO_0000441771" description="Prokaryotic ubiquitin-like protein UBact">
    <location>
        <begin position="1"/>
        <end position="70"/>
    </location>
</feature>
<feature type="region of interest" description="Disordered" evidence="2">
    <location>
        <begin position="1"/>
        <end position="70"/>
    </location>
</feature>
<feature type="compositionally biased region" description="Basic and acidic residues" evidence="2">
    <location>
        <begin position="1"/>
        <end position="15"/>
    </location>
</feature>
<feature type="compositionally biased region" description="Basic and acidic residues" evidence="2">
    <location>
        <begin position="24"/>
        <end position="50"/>
    </location>
</feature>
<feature type="cross-link" description="Isoglutamyl lysine isopeptide (Glu-Lys) (interchain with K-? in acceptor proteins)" evidence="4">
    <location>
        <position position="70"/>
    </location>
</feature>
<keyword id="KW-1017">Isopeptide bond</keyword>
<keyword id="KW-0833">Ubl conjugation pathway</keyword>
<name>UBACT_TERXR</name>
<comment type="function">
    <text evidence="5">May function as a protein modifier covalently attached to lysine residues of substrate proteins. This may serve to target the modified proteins for degradation by proteasomes.</text>
</comment>
<comment type="similarity">
    <text evidence="1">Belongs to the ubiquitin-like protein UBact family.</text>
</comment>
<accession>A0A1G2PK14</accession>
<protein>
    <recommendedName>
        <fullName evidence="3">Prokaryotic ubiquitin-like protein UBact</fullName>
    </recommendedName>
</protein>
<sequence>MPDQRQQERSRRKQGEPSPLPTPTRHDPPPSEQESPVRRMLRDLRERDPGQEAEEEAAQRRQQRREQSGE</sequence>
<dbReference type="EMBL" id="MHST01000018">
    <property type="protein sequence ID" value="OHA48658.1"/>
    <property type="molecule type" value="Genomic_DNA"/>
</dbReference>
<dbReference type="SMR" id="A0A1G2PK14"/>
<dbReference type="STRING" id="1802363.A2682_02640"/>
<dbReference type="Proteomes" id="UP000178690">
    <property type="component" value="Unassembled WGS sequence"/>
</dbReference>
<dbReference type="GO" id="GO:0031386">
    <property type="term" value="F:protein tag activity"/>
    <property type="evidence" value="ECO:0007669"/>
    <property type="project" value="UniProtKB-UniRule"/>
</dbReference>
<dbReference type="HAMAP" id="MF_02133">
    <property type="entry name" value="UBact"/>
    <property type="match status" value="1"/>
</dbReference>
<dbReference type="InterPro" id="IPR037543">
    <property type="entry name" value="UBact"/>
</dbReference>
<proteinExistence type="inferred from homology"/>
<reference key="1">
    <citation type="journal article" date="2016" name="Nat. Commun.">
        <title>Thousands of microbial genomes shed light on interconnected biogeochemical processes in an aquifer system.</title>
        <authorList>
            <person name="Anantharaman K."/>
            <person name="Brown C.T."/>
            <person name="Hug L.A."/>
            <person name="Sharon I."/>
            <person name="Castelle C.J."/>
            <person name="Probst A.J."/>
            <person name="Thomas B.C."/>
            <person name="Singh A."/>
            <person name="Wilkins M.J."/>
            <person name="Karaoz U."/>
            <person name="Brodie E.L."/>
            <person name="Williams K.H."/>
            <person name="Hubbard S.S."/>
            <person name="Banfield J.F."/>
        </authorList>
    </citation>
    <scope>NUCLEOTIDE SEQUENCE [LARGE SCALE GENOMIC DNA]</scope>
    <source>
        <strain>RIFCSPHIGHO2_01_FULL_58_15</strain>
    </source>
</reference>
<reference key="2">
    <citation type="journal article" date="2017" name="Biochem. Biophys. Res. Commun.">
        <title>Identification of UBact, a ubiquitin-like protein, along with other homologous components of a conjugation system and the proteasome in different gram-negative bacteria.</title>
        <authorList>
            <person name="Lehmann G."/>
            <person name="Udasin R.G."/>
            <person name="Livneh I."/>
            <person name="Ciechanover A."/>
        </authorList>
    </citation>
    <scope>PREDICTED FUNCTION</scope>
    <source>
        <strain>RIFCSPHIGHO2_01_FULL_58_15</strain>
    </source>
</reference>
<evidence type="ECO:0000255" key="1">
    <source>
        <dbReference type="HAMAP-Rule" id="MF_02133"/>
    </source>
</evidence>
<evidence type="ECO:0000256" key="2">
    <source>
        <dbReference type="SAM" id="MobiDB-lite"/>
    </source>
</evidence>
<evidence type="ECO:0000303" key="3">
    <source>
    </source>
</evidence>
<evidence type="ECO:0000305" key="4"/>
<evidence type="ECO:0000305" key="5">
    <source>
    </source>
</evidence>
<evidence type="ECO:0000312" key="6">
    <source>
        <dbReference type="EMBL" id="OHA48658.1"/>
    </source>
</evidence>